<keyword id="KW-0067">ATP-binding</keyword>
<keyword id="KW-0963">Cytoplasm</keyword>
<keyword id="KW-0436">Ligase</keyword>
<keyword id="KW-0547">Nucleotide-binding</keyword>
<keyword id="KW-0566">Pantothenate biosynthesis</keyword>
<gene>
    <name evidence="1" type="primary">panC</name>
    <name type="ordered locus">Dhaf_0155</name>
</gene>
<protein>
    <recommendedName>
        <fullName evidence="1">Pantothenate synthetase</fullName>
        <shortName evidence="1">PS</shortName>
        <ecNumber evidence="1">6.3.2.1</ecNumber>
    </recommendedName>
    <alternativeName>
        <fullName evidence="1">Pantoate--beta-alanine ligase</fullName>
    </alternativeName>
    <alternativeName>
        <fullName evidence="1">Pantoate-activating enzyme</fullName>
    </alternativeName>
</protein>
<sequence>MIICKKISAVRDIVKEQRGQGRSIALVPTMGYLHEGHLTLVEEARKSGAFVVMSIFVNPLQFGPNEDFARYPRDLERDAKKAEGAGVDLIFNPEVEEMYPAKNLTHVEVDELGDSLCGASRPGHFRGVTTVVSKLFHIVQPDRAYFGQKDYQQYLIICQMVKDLNFPIEVIGVPIVREEDGLALSSRNIYLSPEQRAEALVLQRSLGEAENWFRQGERSALSIEERIKELIRNESSGEIDYVEIRSAENLHRVEQIEGKIFIALAVRFGSTRLIDNKVLEGM</sequence>
<evidence type="ECO:0000255" key="1">
    <source>
        <dbReference type="HAMAP-Rule" id="MF_00158"/>
    </source>
</evidence>
<proteinExistence type="inferred from homology"/>
<organism>
    <name type="scientific">Desulfitobacterium hafniense (strain DSM 10664 / DCB-2)</name>
    <dbReference type="NCBI Taxonomy" id="272564"/>
    <lineage>
        <taxon>Bacteria</taxon>
        <taxon>Bacillati</taxon>
        <taxon>Bacillota</taxon>
        <taxon>Clostridia</taxon>
        <taxon>Eubacteriales</taxon>
        <taxon>Desulfitobacteriaceae</taxon>
        <taxon>Desulfitobacterium</taxon>
    </lineage>
</organism>
<dbReference type="EC" id="6.3.2.1" evidence="1"/>
<dbReference type="EMBL" id="CP001336">
    <property type="protein sequence ID" value="ACL18223.1"/>
    <property type="molecule type" value="Genomic_DNA"/>
</dbReference>
<dbReference type="RefSeq" id="WP_011458948.1">
    <property type="nucleotide sequence ID" value="NC_011830.1"/>
</dbReference>
<dbReference type="SMR" id="B8FZE0"/>
<dbReference type="KEGG" id="dhd:Dhaf_0155"/>
<dbReference type="HOGENOM" id="CLU_047148_0_0_9"/>
<dbReference type="UniPathway" id="UPA00028">
    <property type="reaction ID" value="UER00005"/>
</dbReference>
<dbReference type="Proteomes" id="UP000007726">
    <property type="component" value="Chromosome"/>
</dbReference>
<dbReference type="GO" id="GO:0005829">
    <property type="term" value="C:cytosol"/>
    <property type="evidence" value="ECO:0007669"/>
    <property type="project" value="TreeGrafter"/>
</dbReference>
<dbReference type="GO" id="GO:0005524">
    <property type="term" value="F:ATP binding"/>
    <property type="evidence" value="ECO:0007669"/>
    <property type="project" value="UniProtKB-KW"/>
</dbReference>
<dbReference type="GO" id="GO:0004592">
    <property type="term" value="F:pantoate-beta-alanine ligase activity"/>
    <property type="evidence" value="ECO:0007669"/>
    <property type="project" value="UniProtKB-UniRule"/>
</dbReference>
<dbReference type="GO" id="GO:0015940">
    <property type="term" value="P:pantothenate biosynthetic process"/>
    <property type="evidence" value="ECO:0007669"/>
    <property type="project" value="UniProtKB-UniRule"/>
</dbReference>
<dbReference type="CDD" id="cd00560">
    <property type="entry name" value="PanC"/>
    <property type="match status" value="1"/>
</dbReference>
<dbReference type="FunFam" id="3.30.1300.10:FF:000001">
    <property type="entry name" value="Pantothenate synthetase"/>
    <property type="match status" value="1"/>
</dbReference>
<dbReference type="FunFam" id="3.40.50.620:FF:000013">
    <property type="entry name" value="Pantothenate synthetase"/>
    <property type="match status" value="1"/>
</dbReference>
<dbReference type="Gene3D" id="3.40.50.620">
    <property type="entry name" value="HUPs"/>
    <property type="match status" value="1"/>
</dbReference>
<dbReference type="Gene3D" id="3.30.1300.10">
    <property type="entry name" value="Pantoate-beta-alanine ligase, C-terminal domain"/>
    <property type="match status" value="1"/>
</dbReference>
<dbReference type="HAMAP" id="MF_00158">
    <property type="entry name" value="PanC"/>
    <property type="match status" value="1"/>
</dbReference>
<dbReference type="InterPro" id="IPR004821">
    <property type="entry name" value="Cyt_trans-like"/>
</dbReference>
<dbReference type="InterPro" id="IPR003721">
    <property type="entry name" value="Pantoate_ligase"/>
</dbReference>
<dbReference type="InterPro" id="IPR042176">
    <property type="entry name" value="Pantoate_ligase_C"/>
</dbReference>
<dbReference type="InterPro" id="IPR014729">
    <property type="entry name" value="Rossmann-like_a/b/a_fold"/>
</dbReference>
<dbReference type="NCBIfam" id="TIGR00125">
    <property type="entry name" value="cyt_tran_rel"/>
    <property type="match status" value="1"/>
</dbReference>
<dbReference type="NCBIfam" id="TIGR00018">
    <property type="entry name" value="panC"/>
    <property type="match status" value="1"/>
</dbReference>
<dbReference type="PANTHER" id="PTHR21299">
    <property type="entry name" value="CYTIDYLATE KINASE/PANTOATE-BETA-ALANINE LIGASE"/>
    <property type="match status" value="1"/>
</dbReference>
<dbReference type="PANTHER" id="PTHR21299:SF1">
    <property type="entry name" value="PANTOATE--BETA-ALANINE LIGASE"/>
    <property type="match status" value="1"/>
</dbReference>
<dbReference type="Pfam" id="PF02569">
    <property type="entry name" value="Pantoate_ligase"/>
    <property type="match status" value="1"/>
</dbReference>
<dbReference type="SUPFAM" id="SSF52374">
    <property type="entry name" value="Nucleotidylyl transferase"/>
    <property type="match status" value="1"/>
</dbReference>
<reference key="1">
    <citation type="journal article" date="2012" name="BMC Microbiol.">
        <title>Genome sequence of Desulfitobacterium hafniense DCB-2, a Gram-positive anaerobe capable of dehalogenation and metal reduction.</title>
        <authorList>
            <person name="Kim S.H."/>
            <person name="Harzman C."/>
            <person name="Davis J.K."/>
            <person name="Hutcheson R."/>
            <person name="Broderick J.B."/>
            <person name="Marsh T.L."/>
            <person name="Tiedje J.M."/>
        </authorList>
    </citation>
    <scope>NUCLEOTIDE SEQUENCE [LARGE SCALE GENOMIC DNA]</scope>
    <source>
        <strain>DSM 10664 / DCB-2</strain>
    </source>
</reference>
<comment type="function">
    <text evidence="1">Catalyzes the condensation of pantoate with beta-alanine in an ATP-dependent reaction via a pantoyl-adenylate intermediate.</text>
</comment>
<comment type="catalytic activity">
    <reaction evidence="1">
        <text>(R)-pantoate + beta-alanine + ATP = (R)-pantothenate + AMP + diphosphate + H(+)</text>
        <dbReference type="Rhea" id="RHEA:10912"/>
        <dbReference type="ChEBI" id="CHEBI:15378"/>
        <dbReference type="ChEBI" id="CHEBI:15980"/>
        <dbReference type="ChEBI" id="CHEBI:29032"/>
        <dbReference type="ChEBI" id="CHEBI:30616"/>
        <dbReference type="ChEBI" id="CHEBI:33019"/>
        <dbReference type="ChEBI" id="CHEBI:57966"/>
        <dbReference type="ChEBI" id="CHEBI:456215"/>
        <dbReference type="EC" id="6.3.2.1"/>
    </reaction>
</comment>
<comment type="pathway">
    <text evidence="1">Cofactor biosynthesis; (R)-pantothenate biosynthesis; (R)-pantothenate from (R)-pantoate and beta-alanine: step 1/1.</text>
</comment>
<comment type="subunit">
    <text evidence="1">Homodimer.</text>
</comment>
<comment type="subcellular location">
    <subcellularLocation>
        <location evidence="1">Cytoplasm</location>
    </subcellularLocation>
</comment>
<comment type="miscellaneous">
    <text evidence="1">The reaction proceeds by a bi uni uni bi ping pong mechanism.</text>
</comment>
<comment type="similarity">
    <text evidence="1">Belongs to the pantothenate synthetase family.</text>
</comment>
<accession>B8FZE0</accession>
<feature type="chain" id="PRO_1000123410" description="Pantothenate synthetase">
    <location>
        <begin position="1"/>
        <end position="282"/>
    </location>
</feature>
<feature type="active site" description="Proton donor" evidence="1">
    <location>
        <position position="37"/>
    </location>
</feature>
<feature type="binding site" evidence="1">
    <location>
        <begin position="30"/>
        <end position="37"/>
    </location>
    <ligand>
        <name>ATP</name>
        <dbReference type="ChEBI" id="CHEBI:30616"/>
    </ligand>
</feature>
<feature type="binding site" evidence="1">
    <location>
        <position position="61"/>
    </location>
    <ligand>
        <name>(R)-pantoate</name>
        <dbReference type="ChEBI" id="CHEBI:15980"/>
    </ligand>
</feature>
<feature type="binding site" evidence="1">
    <location>
        <position position="61"/>
    </location>
    <ligand>
        <name>beta-alanine</name>
        <dbReference type="ChEBI" id="CHEBI:57966"/>
    </ligand>
</feature>
<feature type="binding site" evidence="1">
    <location>
        <begin position="147"/>
        <end position="150"/>
    </location>
    <ligand>
        <name>ATP</name>
        <dbReference type="ChEBI" id="CHEBI:30616"/>
    </ligand>
</feature>
<feature type="binding site" evidence="1">
    <location>
        <position position="153"/>
    </location>
    <ligand>
        <name>(R)-pantoate</name>
        <dbReference type="ChEBI" id="CHEBI:15980"/>
    </ligand>
</feature>
<feature type="binding site" evidence="1">
    <location>
        <position position="176"/>
    </location>
    <ligand>
        <name>ATP</name>
        <dbReference type="ChEBI" id="CHEBI:30616"/>
    </ligand>
</feature>
<feature type="binding site" evidence="1">
    <location>
        <begin position="184"/>
        <end position="187"/>
    </location>
    <ligand>
        <name>ATP</name>
        <dbReference type="ChEBI" id="CHEBI:30616"/>
    </ligand>
</feature>
<name>PANC_DESHD</name>